<organism>
    <name type="scientific">Staphylococcus aureus (strain COL)</name>
    <dbReference type="NCBI Taxonomy" id="93062"/>
    <lineage>
        <taxon>Bacteria</taxon>
        <taxon>Bacillati</taxon>
        <taxon>Bacillota</taxon>
        <taxon>Bacilli</taxon>
        <taxon>Bacillales</taxon>
        <taxon>Staphylococcaceae</taxon>
        <taxon>Staphylococcus</taxon>
    </lineage>
</organism>
<keyword id="KW-0067">ATP-binding</keyword>
<keyword id="KW-0418">Kinase</keyword>
<keyword id="KW-0444">Lipid biosynthesis</keyword>
<keyword id="KW-0443">Lipid metabolism</keyword>
<keyword id="KW-0460">Magnesium</keyword>
<keyword id="KW-0479">Metal-binding</keyword>
<keyword id="KW-0547">Nucleotide-binding</keyword>
<keyword id="KW-0594">Phospholipid biosynthesis</keyword>
<keyword id="KW-1208">Phospholipid metabolism</keyword>
<keyword id="KW-0808">Transferase</keyword>
<sequence>MRKRARIIYNPTSGKELFKRELPDALIKLEKAGYETSAYATEKIGDATLEAERAMHENYDVLIAAGGDGTLNEVVNGIAEKPNRPKLGVIPMGTVNDFGRALHIPNDIMGALDVIIEGHSTKVDIGKMNNRYFINLAAGGQLTQVSYETPSKLKSIVGPFAYYIKGFEMLPQMKAVDLRIEYDGNVFQGEALLFFLGLTNSMAGFEKLVPDAKLDDGYFTLIIVEKSNLAELGHIMTLASRGEHTKHPKVIYEKAKAINISSFTDLQLNVDGEYGGKLPANFLNLERHIDVFAPNDIVNEELINNDHVDDNLIEE</sequence>
<reference key="1">
    <citation type="journal article" date="2005" name="J. Bacteriol.">
        <title>Insights on evolution of virulence and resistance from the complete genome analysis of an early methicillin-resistant Staphylococcus aureus strain and a biofilm-producing methicillin-resistant Staphylococcus epidermidis strain.</title>
        <authorList>
            <person name="Gill S.R."/>
            <person name="Fouts D.E."/>
            <person name="Archer G.L."/>
            <person name="Mongodin E.F."/>
            <person name="DeBoy R.T."/>
            <person name="Ravel J."/>
            <person name="Paulsen I.T."/>
            <person name="Kolonay J.F."/>
            <person name="Brinkac L.M."/>
            <person name="Beanan M.J."/>
            <person name="Dodson R.J."/>
            <person name="Daugherty S.C."/>
            <person name="Madupu R."/>
            <person name="Angiuoli S.V."/>
            <person name="Durkin A.S."/>
            <person name="Haft D.H."/>
            <person name="Vamathevan J.J."/>
            <person name="Khouri H."/>
            <person name="Utterback T.R."/>
            <person name="Lee C."/>
            <person name="Dimitrov G."/>
            <person name="Jiang L."/>
            <person name="Qin H."/>
            <person name="Weidman J."/>
            <person name="Tran K."/>
            <person name="Kang K.H."/>
            <person name="Hance I.R."/>
            <person name="Nelson K.E."/>
            <person name="Fraser C.M."/>
        </authorList>
    </citation>
    <scope>NUCLEOTIDE SEQUENCE [LARGE SCALE GENOMIC DNA]</scope>
    <source>
        <strain>COL</strain>
    </source>
</reference>
<proteinExistence type="inferred from homology"/>
<protein>
    <recommendedName>
        <fullName>Diacylglycerol kinase</fullName>
        <shortName>DAG kinase</shortName>
        <shortName>DAGK</shortName>
        <ecNumber evidence="1">2.7.1.107</ecNumber>
    </recommendedName>
</protein>
<dbReference type="EC" id="2.7.1.107" evidence="1"/>
<dbReference type="EMBL" id="CP000046">
    <property type="protein sequence ID" value="AAW38399.1"/>
    <property type="molecule type" value="Genomic_DNA"/>
</dbReference>
<dbReference type="RefSeq" id="WP_001231451.1">
    <property type="nucleotide sequence ID" value="NZ_JBGOFO010000006.1"/>
</dbReference>
<dbReference type="SMR" id="Q5HEM4"/>
<dbReference type="KEGG" id="sac:SACOL1958"/>
<dbReference type="HOGENOM" id="CLU_045532_1_0_9"/>
<dbReference type="Proteomes" id="UP000000530">
    <property type="component" value="Chromosome"/>
</dbReference>
<dbReference type="GO" id="GO:0005886">
    <property type="term" value="C:plasma membrane"/>
    <property type="evidence" value="ECO:0007669"/>
    <property type="project" value="TreeGrafter"/>
</dbReference>
<dbReference type="GO" id="GO:0005524">
    <property type="term" value="F:ATP binding"/>
    <property type="evidence" value="ECO:0007669"/>
    <property type="project" value="UniProtKB-KW"/>
</dbReference>
<dbReference type="GO" id="GO:0004143">
    <property type="term" value="F:ATP-dependent diacylglycerol kinase activity"/>
    <property type="evidence" value="ECO:0007669"/>
    <property type="project" value="UniProtKB-EC"/>
</dbReference>
<dbReference type="GO" id="GO:0046872">
    <property type="term" value="F:metal ion binding"/>
    <property type="evidence" value="ECO:0007669"/>
    <property type="project" value="UniProtKB-KW"/>
</dbReference>
<dbReference type="GO" id="GO:0008654">
    <property type="term" value="P:phospholipid biosynthetic process"/>
    <property type="evidence" value="ECO:0007669"/>
    <property type="project" value="UniProtKB-KW"/>
</dbReference>
<dbReference type="FunFam" id="2.60.200.40:FF:000015">
    <property type="entry name" value="Diacylglycerol kinase"/>
    <property type="match status" value="1"/>
</dbReference>
<dbReference type="FunFam" id="3.40.50.10330:FF:000008">
    <property type="entry name" value="Probable lipid kinase YegS"/>
    <property type="match status" value="1"/>
</dbReference>
<dbReference type="Gene3D" id="2.60.200.40">
    <property type="match status" value="1"/>
</dbReference>
<dbReference type="Gene3D" id="3.40.50.10330">
    <property type="entry name" value="Probable inorganic polyphosphate/atp-NAD kinase, domain 1"/>
    <property type="match status" value="1"/>
</dbReference>
<dbReference type="InterPro" id="IPR017438">
    <property type="entry name" value="ATP-NAD_kinase_N"/>
</dbReference>
<dbReference type="InterPro" id="IPR005218">
    <property type="entry name" value="Diacylglycerol/lipid_kinase"/>
</dbReference>
<dbReference type="InterPro" id="IPR001206">
    <property type="entry name" value="Diacylglycerol_kinase_cat_dom"/>
</dbReference>
<dbReference type="InterPro" id="IPR050187">
    <property type="entry name" value="Lipid_Phosphate_FormReg"/>
</dbReference>
<dbReference type="InterPro" id="IPR016064">
    <property type="entry name" value="NAD/diacylglycerol_kinase_sf"/>
</dbReference>
<dbReference type="InterPro" id="IPR045540">
    <property type="entry name" value="YegS/DAGK_C"/>
</dbReference>
<dbReference type="NCBIfam" id="NF009603">
    <property type="entry name" value="PRK13055.1"/>
    <property type="match status" value="1"/>
</dbReference>
<dbReference type="NCBIfam" id="NF009874">
    <property type="entry name" value="PRK13337.1"/>
    <property type="match status" value="1"/>
</dbReference>
<dbReference type="NCBIfam" id="TIGR00147">
    <property type="entry name" value="YegS/Rv2252/BmrU family lipid kinase"/>
    <property type="match status" value="1"/>
</dbReference>
<dbReference type="PANTHER" id="PTHR12358:SF106">
    <property type="entry name" value="LIPID KINASE YEGS"/>
    <property type="match status" value="1"/>
</dbReference>
<dbReference type="PANTHER" id="PTHR12358">
    <property type="entry name" value="SPHINGOSINE KINASE"/>
    <property type="match status" value="1"/>
</dbReference>
<dbReference type="Pfam" id="PF00781">
    <property type="entry name" value="DAGK_cat"/>
    <property type="match status" value="1"/>
</dbReference>
<dbReference type="Pfam" id="PF19279">
    <property type="entry name" value="YegS_C"/>
    <property type="match status" value="1"/>
</dbReference>
<dbReference type="SMART" id="SM00046">
    <property type="entry name" value="DAGKc"/>
    <property type="match status" value="1"/>
</dbReference>
<dbReference type="SUPFAM" id="SSF111331">
    <property type="entry name" value="NAD kinase/diacylglycerol kinase-like"/>
    <property type="match status" value="1"/>
</dbReference>
<dbReference type="PROSITE" id="PS50146">
    <property type="entry name" value="DAGK"/>
    <property type="match status" value="1"/>
</dbReference>
<evidence type="ECO:0000250" key="1">
    <source>
        <dbReference type="UniProtKB" id="Q6GFF9"/>
    </source>
</evidence>
<evidence type="ECO:0000255" key="2">
    <source>
        <dbReference type="PROSITE-ProRule" id="PRU00783"/>
    </source>
</evidence>
<evidence type="ECO:0000305" key="3"/>
<comment type="function">
    <text evidence="1">Catalyzes the phosphorylation of diacylglycerol (DAG) into phosphatidic acid. Is a key enzyme involved in the production of lipoteichoic acid by reintroducing DAG formed from the breakdown of membrane phospholipids into the phosphatidylglycerol biosynthetic pathway.</text>
</comment>
<comment type="catalytic activity">
    <reaction evidence="1">
        <text>a 1,2-diacyl-sn-glycerol + ATP = a 1,2-diacyl-sn-glycero-3-phosphate + ADP + H(+)</text>
        <dbReference type="Rhea" id="RHEA:10272"/>
        <dbReference type="ChEBI" id="CHEBI:15378"/>
        <dbReference type="ChEBI" id="CHEBI:17815"/>
        <dbReference type="ChEBI" id="CHEBI:30616"/>
        <dbReference type="ChEBI" id="CHEBI:58608"/>
        <dbReference type="ChEBI" id="CHEBI:456216"/>
        <dbReference type="EC" id="2.7.1.107"/>
    </reaction>
</comment>
<comment type="cofactor">
    <cofactor evidence="1">
        <name>Mg(2+)</name>
        <dbReference type="ChEBI" id="CHEBI:18420"/>
    </cofactor>
    <text evidence="1">Binds 1 Mg(2+) ion per subunit. This ion appears to have a structural role and is required for catalytic activity.</text>
</comment>
<comment type="subunit">
    <text evidence="1">Homodimer.</text>
</comment>
<comment type="similarity">
    <text evidence="3">Belongs to the diacylglycerol/lipid kinase family.</text>
</comment>
<feature type="chain" id="PRO_0000386491" description="Diacylglycerol kinase">
    <location>
        <begin position="1"/>
        <end position="315"/>
    </location>
</feature>
<feature type="domain" description="DAGKc" evidence="2">
    <location>
        <begin position="1"/>
        <end position="132"/>
    </location>
</feature>
<feature type="active site" description="Proton acceptor" evidence="1">
    <location>
        <position position="273"/>
    </location>
</feature>
<feature type="binding site" evidence="2">
    <location>
        <begin position="10"/>
        <end position="14"/>
    </location>
    <ligand>
        <name>ATP</name>
        <dbReference type="ChEBI" id="CHEBI:30616"/>
    </ligand>
</feature>
<feature type="binding site" evidence="2">
    <location>
        <position position="41"/>
    </location>
    <ligand>
        <name>ATP</name>
        <dbReference type="ChEBI" id="CHEBI:30616"/>
    </ligand>
</feature>
<feature type="binding site" evidence="2">
    <location>
        <begin position="67"/>
        <end position="73"/>
    </location>
    <ligand>
        <name>ATP</name>
        <dbReference type="ChEBI" id="CHEBI:30616"/>
    </ligand>
</feature>
<feature type="binding site" evidence="2">
    <location>
        <position position="94"/>
    </location>
    <ligand>
        <name>ATP</name>
        <dbReference type="ChEBI" id="CHEBI:30616"/>
    </ligand>
</feature>
<feature type="binding site" evidence="1">
    <location>
        <position position="213"/>
    </location>
    <ligand>
        <name>Mg(2+)</name>
        <dbReference type="ChEBI" id="CHEBI:18420"/>
    </ligand>
</feature>
<feature type="binding site" evidence="1">
    <location>
        <position position="216"/>
    </location>
    <ligand>
        <name>Mg(2+)</name>
        <dbReference type="ChEBI" id="CHEBI:18420"/>
    </ligand>
</feature>
<feature type="binding site" evidence="1">
    <location>
        <position position="218"/>
    </location>
    <ligand>
        <name>Mg(2+)</name>
        <dbReference type="ChEBI" id="CHEBI:18420"/>
    </ligand>
</feature>
<accession>Q5HEM4</accession>
<name>DAGK_STAAC</name>
<gene>
    <name type="primary">dagK</name>
    <name type="ordered locus">SACOL1958</name>
</gene>